<feature type="chain" id="PRO_0000272224" description="F-box protein SKIP2">
    <location>
        <begin position="1"/>
        <end position="527"/>
    </location>
</feature>
<feature type="domain" description="F-box">
    <location>
        <begin position="39"/>
        <end position="85"/>
    </location>
</feature>
<feature type="sequence conflict" description="In Ref. 6; BAE98487." evidence="4" ref="6">
    <original>V</original>
    <variation>I</variation>
    <location>
        <position position="467"/>
    </location>
</feature>
<reference key="1">
    <citation type="journal article" date="2001" name="EMBO J.">
        <title>SKP1-SnRK protein kinase interactions mediate proteasomal binding of a plant SCF ubiquitin ligase.</title>
        <authorList>
            <person name="Farras R."/>
            <person name="Ferrando A."/>
            <person name="Jasik J."/>
            <person name="Kleinow T."/>
            <person name="Oekresz L."/>
            <person name="Tiburcio A."/>
            <person name="Salchert K."/>
            <person name="del Pozo C."/>
            <person name="Schell J."/>
            <person name="Koncz C."/>
        </authorList>
    </citation>
    <scope>NUCLEOTIDE SEQUENCE [MRNA]</scope>
    <scope>INTERACTION WITH SKP1A/ASK1</scope>
</reference>
<reference key="2">
    <citation type="journal article" date="2000" name="DNA Res.">
        <title>Structural analysis of Arabidopsis thaliana chromosome 5. X. Sequence features of the regions of 3,076,755 bp covered by sixty P1 and TAC clones.</title>
        <authorList>
            <person name="Sato S."/>
            <person name="Nakamura Y."/>
            <person name="Kaneko T."/>
            <person name="Katoh T."/>
            <person name="Asamizu E."/>
            <person name="Kotani H."/>
            <person name="Tabata S."/>
        </authorList>
    </citation>
    <scope>NUCLEOTIDE SEQUENCE [LARGE SCALE GENOMIC DNA]</scope>
    <source>
        <strain>cv. Columbia</strain>
    </source>
</reference>
<reference key="3">
    <citation type="submission" date="1999-04" db="EMBL/GenBank/DDBJ databases">
        <title>Structural analysis of Arabidopsis thaliana chromosome 5. XI.</title>
        <authorList>
            <person name="Kaneko T."/>
            <person name="Katoh T."/>
            <person name="Asamizu E."/>
            <person name="Sato S."/>
            <person name="Nakamura Y."/>
            <person name="Kotani H."/>
            <person name="Tabata S."/>
        </authorList>
    </citation>
    <scope>NUCLEOTIDE SEQUENCE [LARGE SCALE GENOMIC DNA]</scope>
    <source>
        <strain>cv. Columbia</strain>
    </source>
</reference>
<reference key="4">
    <citation type="journal article" date="2017" name="Plant J.">
        <title>Araport11: a complete reannotation of the Arabidopsis thaliana reference genome.</title>
        <authorList>
            <person name="Cheng C.Y."/>
            <person name="Krishnakumar V."/>
            <person name="Chan A.P."/>
            <person name="Thibaud-Nissen F."/>
            <person name="Schobel S."/>
            <person name="Town C.D."/>
        </authorList>
    </citation>
    <scope>GENOME REANNOTATION</scope>
    <source>
        <strain>cv. Columbia</strain>
    </source>
</reference>
<reference key="5">
    <citation type="journal article" date="2003" name="Science">
        <title>Empirical analysis of transcriptional activity in the Arabidopsis genome.</title>
        <authorList>
            <person name="Yamada K."/>
            <person name="Lim J."/>
            <person name="Dale J.M."/>
            <person name="Chen H."/>
            <person name="Shinn P."/>
            <person name="Palm C.J."/>
            <person name="Southwick A.M."/>
            <person name="Wu H.C."/>
            <person name="Kim C.J."/>
            <person name="Nguyen M."/>
            <person name="Pham P.K."/>
            <person name="Cheuk R.F."/>
            <person name="Karlin-Newmann G."/>
            <person name="Liu S.X."/>
            <person name="Lam B."/>
            <person name="Sakano H."/>
            <person name="Wu T."/>
            <person name="Yu G."/>
            <person name="Miranda M."/>
            <person name="Quach H.L."/>
            <person name="Tripp M."/>
            <person name="Chang C.H."/>
            <person name="Lee J.M."/>
            <person name="Toriumi M.J."/>
            <person name="Chan M.M."/>
            <person name="Tang C.C."/>
            <person name="Onodera C.S."/>
            <person name="Deng J.M."/>
            <person name="Akiyama K."/>
            <person name="Ansari Y."/>
            <person name="Arakawa T."/>
            <person name="Banh J."/>
            <person name="Banno F."/>
            <person name="Bowser L."/>
            <person name="Brooks S.Y."/>
            <person name="Carninci P."/>
            <person name="Chao Q."/>
            <person name="Choy N."/>
            <person name="Enju A."/>
            <person name="Goldsmith A.D."/>
            <person name="Gurjal M."/>
            <person name="Hansen N.F."/>
            <person name="Hayashizaki Y."/>
            <person name="Johnson-Hopson C."/>
            <person name="Hsuan V.W."/>
            <person name="Iida K."/>
            <person name="Karnes M."/>
            <person name="Khan S."/>
            <person name="Koesema E."/>
            <person name="Ishida J."/>
            <person name="Jiang P.X."/>
            <person name="Jones T."/>
            <person name="Kawai J."/>
            <person name="Kamiya A."/>
            <person name="Meyers C."/>
            <person name="Nakajima M."/>
            <person name="Narusaka M."/>
            <person name="Seki M."/>
            <person name="Sakurai T."/>
            <person name="Satou M."/>
            <person name="Tamse R."/>
            <person name="Vaysberg M."/>
            <person name="Wallender E.K."/>
            <person name="Wong C."/>
            <person name="Yamamura Y."/>
            <person name="Yuan S."/>
            <person name="Shinozaki K."/>
            <person name="Davis R.W."/>
            <person name="Theologis A."/>
            <person name="Ecker J.R."/>
        </authorList>
    </citation>
    <scope>NUCLEOTIDE SEQUENCE [LARGE SCALE MRNA]</scope>
    <source>
        <strain>cv. Columbia</strain>
    </source>
</reference>
<reference key="6">
    <citation type="submission" date="2006-07" db="EMBL/GenBank/DDBJ databases">
        <title>Large-scale analysis of RIKEN Arabidopsis full-length (RAFL) cDNAs.</title>
        <authorList>
            <person name="Totoki Y."/>
            <person name="Seki M."/>
            <person name="Ishida J."/>
            <person name="Nakajima M."/>
            <person name="Enju A."/>
            <person name="Kamiya A."/>
            <person name="Narusaka M."/>
            <person name="Shin-i T."/>
            <person name="Nakagawa M."/>
            <person name="Sakamoto N."/>
            <person name="Oishi K."/>
            <person name="Kohara Y."/>
            <person name="Kobayashi M."/>
            <person name="Toyoda A."/>
            <person name="Sakaki Y."/>
            <person name="Sakurai T."/>
            <person name="Iida K."/>
            <person name="Akiyama K."/>
            <person name="Satou M."/>
            <person name="Toyoda T."/>
            <person name="Konagaya A."/>
            <person name="Carninci P."/>
            <person name="Kawai J."/>
            <person name="Hayashizaki Y."/>
            <person name="Shinozaki K."/>
        </authorList>
    </citation>
    <scope>NUCLEOTIDE SEQUENCE [LARGE SCALE MRNA]</scope>
    <source>
        <strain>cv. Columbia</strain>
    </source>
</reference>
<reference key="7">
    <citation type="journal article" date="2002" name="Proc. Natl. Acad. Sci. U.S.A.">
        <title>The F-box subunit of the SCF E3 complex is encoded by a diverse superfamily of genes in Arabidopsis.</title>
        <authorList>
            <person name="Gagne J.M."/>
            <person name="Downes B.P."/>
            <person name="Shiu S.-H."/>
            <person name="Durski A.M."/>
            <person name="Vierstra R.D."/>
        </authorList>
    </citation>
    <scope>INTERACTION WITH SKP1A/ASK1; SKP1B/ASK2 AND ASK11</scope>
</reference>
<accession>Q9FE83</accession>
<accession>Q0WWL1</accession>
<accession>Q940A1</accession>
<proteinExistence type="evidence at protein level"/>
<comment type="function">
    <text evidence="1">Component of SCF(ASK-cullin-F-box) E3 ubiquitin ligase complexes, which may mediate the ubiquitination and subsequent proteasomal degradation of target proteins.</text>
</comment>
<comment type="pathway">
    <text>Protein modification; protein ubiquitination.</text>
</comment>
<comment type="subunit">
    <text evidence="1 2 3">Part of a SCF (ASK-cullin-F-box) protein ligase complex (By similarity). Interacts with SKP1A/ASK1, SKP1B/ASK2 and ASK11.</text>
</comment>
<comment type="interaction">
    <interactant intactId="EBI-591107">
        <id>Q9FE83</id>
    </interactant>
    <interactant intactId="EBI-532357">
        <id>Q39255</id>
        <label>SKP1A</label>
    </interactant>
    <organismsDiffer>false</organismsDiffer>
    <experiments>3</experiments>
</comment>
<comment type="subcellular location">
    <subcellularLocation>
        <location evidence="1">Nucleus</location>
    </subcellularLocation>
</comment>
<comment type="domain">
    <text evidence="1">The F-box is necessary for the interaction with ASK proteins.</text>
</comment>
<comment type="sequence caution" evidence="4">
    <conflict type="frameshift">
        <sequence resource="EMBL-CDS" id="AAL07231"/>
    </conflict>
</comment>
<protein>
    <recommendedName>
        <fullName>F-box protein SKIP2</fullName>
    </recommendedName>
    <alternativeName>
        <fullName>SKP1-interacting partner 2</fullName>
    </alternativeName>
</protein>
<dbReference type="EMBL" id="AF263378">
    <property type="protein sequence ID" value="AAG21977.1"/>
    <property type="molecule type" value="mRNA"/>
</dbReference>
<dbReference type="EMBL" id="AB020742">
    <property type="protein sequence ID" value="BAB10959.1"/>
    <property type="molecule type" value="Genomic_DNA"/>
</dbReference>
<dbReference type="EMBL" id="AB025614">
    <property type="protein sequence ID" value="BAB10959.1"/>
    <property type="status" value="JOINED"/>
    <property type="molecule type" value="Genomic_DNA"/>
</dbReference>
<dbReference type="EMBL" id="CP002688">
    <property type="protein sequence ID" value="AED98320.1"/>
    <property type="molecule type" value="Genomic_DNA"/>
</dbReference>
<dbReference type="EMBL" id="AY056152">
    <property type="protein sequence ID" value="AAL07231.1"/>
    <property type="status" value="ALT_FRAME"/>
    <property type="molecule type" value="mRNA"/>
</dbReference>
<dbReference type="EMBL" id="BT002473">
    <property type="protein sequence ID" value="AAO00833.1"/>
    <property type="molecule type" value="mRNA"/>
</dbReference>
<dbReference type="EMBL" id="BT008886">
    <property type="protein sequence ID" value="AAP68325.1"/>
    <property type="molecule type" value="mRNA"/>
</dbReference>
<dbReference type="EMBL" id="AK226338">
    <property type="protein sequence ID" value="BAE98487.1"/>
    <property type="molecule type" value="mRNA"/>
</dbReference>
<dbReference type="RefSeq" id="NP_569047.1">
    <property type="nucleotide sequence ID" value="NM_126125.3"/>
</dbReference>
<dbReference type="SMR" id="Q9FE83"/>
<dbReference type="BioGRID" id="22102">
    <property type="interactions" value="5"/>
</dbReference>
<dbReference type="FunCoup" id="Q9FE83">
    <property type="interactions" value="1016"/>
</dbReference>
<dbReference type="IntAct" id="Q9FE83">
    <property type="interactions" value="3"/>
</dbReference>
<dbReference type="STRING" id="3702.Q9FE83"/>
<dbReference type="iPTMnet" id="Q9FE83"/>
<dbReference type="PaxDb" id="3702-AT5G67250.1"/>
<dbReference type="ProteomicsDB" id="234586"/>
<dbReference type="EnsemblPlants" id="AT5G67250.1">
    <property type="protein sequence ID" value="AT5G67250.1"/>
    <property type="gene ID" value="AT5G67250"/>
</dbReference>
<dbReference type="GeneID" id="836860"/>
<dbReference type="Gramene" id="AT5G67250.1">
    <property type="protein sequence ID" value="AT5G67250.1"/>
    <property type="gene ID" value="AT5G67250"/>
</dbReference>
<dbReference type="KEGG" id="ath:AT5G67250"/>
<dbReference type="Araport" id="AT5G67250"/>
<dbReference type="TAIR" id="AT5G67250">
    <property type="gene designation" value="SKIP2"/>
</dbReference>
<dbReference type="eggNOG" id="KOG1947">
    <property type="taxonomic scope" value="Eukaryota"/>
</dbReference>
<dbReference type="HOGENOM" id="CLU_016072_4_0_1"/>
<dbReference type="InParanoid" id="Q9FE83"/>
<dbReference type="OMA" id="FMRFDSV"/>
<dbReference type="OrthoDB" id="423607at2759"/>
<dbReference type="PhylomeDB" id="Q9FE83"/>
<dbReference type="UniPathway" id="UPA00143"/>
<dbReference type="PRO" id="PR:Q9FE83"/>
<dbReference type="Proteomes" id="UP000006548">
    <property type="component" value="Chromosome 5"/>
</dbReference>
<dbReference type="ExpressionAtlas" id="Q9FE83">
    <property type="expression patterns" value="baseline and differential"/>
</dbReference>
<dbReference type="GO" id="GO:0005737">
    <property type="term" value="C:cytoplasm"/>
    <property type="evidence" value="ECO:0000314"/>
    <property type="project" value="TAIR"/>
</dbReference>
<dbReference type="GO" id="GO:0005634">
    <property type="term" value="C:nucleus"/>
    <property type="evidence" value="ECO:0007669"/>
    <property type="project" value="UniProtKB-SubCell"/>
</dbReference>
<dbReference type="GO" id="GO:0004842">
    <property type="term" value="F:ubiquitin-protein transferase activity"/>
    <property type="evidence" value="ECO:0000250"/>
    <property type="project" value="TAIR"/>
</dbReference>
<dbReference type="GO" id="GO:0016567">
    <property type="term" value="P:protein ubiquitination"/>
    <property type="evidence" value="ECO:0007669"/>
    <property type="project" value="UniProtKB-UniPathway"/>
</dbReference>
<dbReference type="CDD" id="cd22159">
    <property type="entry name" value="F-box_AtTIR1-like"/>
    <property type="match status" value="1"/>
</dbReference>
<dbReference type="FunFam" id="3.80.10.10:FF:000449">
    <property type="entry name" value="F-box protein SKIP2"/>
    <property type="match status" value="1"/>
</dbReference>
<dbReference type="FunFam" id="1.20.1280.50:FF:000005">
    <property type="entry name" value="F-box/LRR-repeat protein 3 isoform X1"/>
    <property type="match status" value="1"/>
</dbReference>
<dbReference type="Gene3D" id="1.20.1280.50">
    <property type="match status" value="1"/>
</dbReference>
<dbReference type="Gene3D" id="3.80.10.10">
    <property type="entry name" value="Ribonuclease Inhibitor"/>
    <property type="match status" value="1"/>
</dbReference>
<dbReference type="InterPro" id="IPR036047">
    <property type="entry name" value="F-box-like_dom_sf"/>
</dbReference>
<dbReference type="InterPro" id="IPR001810">
    <property type="entry name" value="F-box_dom"/>
</dbReference>
<dbReference type="InterPro" id="IPR001611">
    <property type="entry name" value="Leu-rich_rpt"/>
</dbReference>
<dbReference type="InterPro" id="IPR006553">
    <property type="entry name" value="Leu-rich_rpt_Cys-con_subtyp"/>
</dbReference>
<dbReference type="InterPro" id="IPR032675">
    <property type="entry name" value="LRR_dom_sf"/>
</dbReference>
<dbReference type="PANTHER" id="PTHR13318:SF133">
    <property type="entry name" value="F-BOX PROTEIN SKIP2"/>
    <property type="match status" value="1"/>
</dbReference>
<dbReference type="PANTHER" id="PTHR13318">
    <property type="entry name" value="PARTNER OF PAIRED, ISOFORM B-RELATED"/>
    <property type="match status" value="1"/>
</dbReference>
<dbReference type="Pfam" id="PF12937">
    <property type="entry name" value="F-box-like"/>
    <property type="match status" value="1"/>
</dbReference>
<dbReference type="Pfam" id="PF13516">
    <property type="entry name" value="LRR_6"/>
    <property type="match status" value="2"/>
</dbReference>
<dbReference type="SMART" id="SM00367">
    <property type="entry name" value="LRR_CC"/>
    <property type="match status" value="7"/>
</dbReference>
<dbReference type="SUPFAM" id="SSF81383">
    <property type="entry name" value="F-box domain"/>
    <property type="match status" value="1"/>
</dbReference>
<dbReference type="SUPFAM" id="SSF52047">
    <property type="entry name" value="RNI-like"/>
    <property type="match status" value="1"/>
</dbReference>
<gene>
    <name type="primary">SKIP2</name>
    <name type="ordered locus">At5g67250</name>
    <name type="ORF">K21H1.21</name>
</gene>
<name>SKIP2_ARATH</name>
<keyword id="KW-0539">Nucleus</keyword>
<keyword id="KW-1185">Reference proteome</keyword>
<keyword id="KW-0833">Ubl conjugation pathway</keyword>
<organism>
    <name type="scientific">Arabidopsis thaliana</name>
    <name type="common">Mouse-ear cress</name>
    <dbReference type="NCBI Taxonomy" id="3702"/>
    <lineage>
        <taxon>Eukaryota</taxon>
        <taxon>Viridiplantae</taxon>
        <taxon>Streptophyta</taxon>
        <taxon>Embryophyta</taxon>
        <taxon>Tracheophyta</taxon>
        <taxon>Spermatophyta</taxon>
        <taxon>Magnoliopsida</taxon>
        <taxon>eudicotyledons</taxon>
        <taxon>Gunneridae</taxon>
        <taxon>Pentapetalae</taxon>
        <taxon>rosids</taxon>
        <taxon>malvids</taxon>
        <taxon>Brassicales</taxon>
        <taxon>Brassicaceae</taxon>
        <taxon>Camelineae</taxon>
        <taxon>Arabidopsis</taxon>
    </lineage>
</organism>
<sequence>MGQAPSSTAESNGRELDLRLWSPVIVAGGESMAVGNVVDRDFTGDLPDECLAHVFQFLGAGDRKRCSLVCKRWLLVDGQSRHRLSLDAKDEISSFLTSMFNRFDSVTKLALRCDRKSVSLSDEALAMISVRCLNLTRVKLRGCREITDLGMEDFAKNCKNLKKLSVGSCNFGAKGVNAMLEHCKLLEELSVKRLRGIHEAAELIHLPDDASSSSLRSICLKELVNGQVFEPLLATTRTLKTLKIIRCLGDWDKVLQMIANGKSSLSEIHLERLQVSDIGLSAISKCSNVETLHIVKTPECSNFGLIYVAERCKLLRKLHIDGWRTNRIGDEGLLSVAKHCLNLQELVLIGVNATHMSLAAIASNCEKLERLALCGSGTIGDTEIACIARKCGALRKFCIKGCPVSDRGIEALAVGCPNLVKLKVKKCKVVTGEIGDWLREQRRTLVVSMDGDETEAVVVVDGEVETVVEEPRVAQAGGIVAEIGSSNGGGGSRLAMIRSKLGFLAGRNLVTCTFRRWSHNDNASSST</sequence>
<evidence type="ECO:0000250" key="1"/>
<evidence type="ECO:0000269" key="2">
    <source>
    </source>
</evidence>
<evidence type="ECO:0000269" key="3">
    <source>
    </source>
</evidence>
<evidence type="ECO:0000305" key="4"/>